<feature type="signal peptide" evidence="2">
    <location>
        <begin position="1"/>
        <end position="20"/>
    </location>
</feature>
<feature type="propeptide" id="PRO_0000401513" evidence="1">
    <location>
        <begin position="21"/>
        <end position="41"/>
    </location>
</feature>
<feature type="chain" id="PRO_0000401514" description="U1-lycotoxin-Ls1e">
    <location>
        <begin position="42"/>
        <end position="107"/>
    </location>
</feature>
<feature type="disulfide bond" evidence="1">
    <location>
        <begin position="44"/>
        <end position="59"/>
    </location>
</feature>
<feature type="disulfide bond" evidence="1">
    <location>
        <begin position="51"/>
        <end position="68"/>
    </location>
</feature>
<feature type="disulfide bond" evidence="1">
    <location>
        <begin position="58"/>
        <end position="86"/>
    </location>
</feature>
<feature type="disulfide bond" evidence="1">
    <location>
        <begin position="70"/>
        <end position="84"/>
    </location>
</feature>
<evidence type="ECO:0000250" key="1"/>
<evidence type="ECO:0000255" key="2"/>
<evidence type="ECO:0000305" key="3"/>
<sequence length="107" mass="11914">MMKVLVVVALLVTLISYSSSEGIDDLEADELLSLMANEQTRKECIPKHHECTSNKHGCCRGNFFKYKCQCTTVVTQDGEQTERCFCGTPPHHKAAELMVGFGKKIFG</sequence>
<organism>
    <name type="scientific">Lycosa singoriensis</name>
    <name type="common">Wolf spider</name>
    <name type="synonym">Aranea singoriensis</name>
    <dbReference type="NCBI Taxonomy" id="434756"/>
    <lineage>
        <taxon>Eukaryota</taxon>
        <taxon>Metazoa</taxon>
        <taxon>Ecdysozoa</taxon>
        <taxon>Arthropoda</taxon>
        <taxon>Chelicerata</taxon>
        <taxon>Arachnida</taxon>
        <taxon>Araneae</taxon>
        <taxon>Araneomorphae</taxon>
        <taxon>Entelegynae</taxon>
        <taxon>Lycosoidea</taxon>
        <taxon>Lycosidae</taxon>
        <taxon>Lycosa</taxon>
    </lineage>
</organism>
<reference key="1">
    <citation type="journal article" date="2010" name="Zoology">
        <title>Transcriptome analysis of the venom glands of the Chinese wolf spider Lycosa singoriensis.</title>
        <authorList>
            <person name="Zhang Y."/>
            <person name="Chen J."/>
            <person name="Tang X."/>
            <person name="Wang F."/>
            <person name="Jiang L."/>
            <person name="Xiong X."/>
            <person name="Wang M."/>
            <person name="Rong M."/>
            <person name="Liu Z."/>
            <person name="Liang S."/>
        </authorList>
    </citation>
    <scope>NUCLEOTIDE SEQUENCE [LARGE SCALE MRNA]</scope>
    <source>
        <tissue>Venom gland</tissue>
    </source>
</reference>
<comment type="subcellular location">
    <subcellularLocation>
        <location evidence="1">Secreted</location>
    </subcellularLocation>
</comment>
<comment type="tissue specificity">
    <text>Expressed by the venom gland.</text>
</comment>
<comment type="domain">
    <text evidence="1">The presence of a 'disulfide through disulfide knot' structurally defines this protein as a knottin.</text>
</comment>
<comment type="similarity">
    <text evidence="3">Belongs to the neurotoxin 19 (CSTX) family. 04 (U1-Lctx) subfamily.</text>
</comment>
<protein>
    <recommendedName>
        <fullName>U1-lycotoxin-Ls1e</fullName>
    </recommendedName>
    <alternativeName>
        <fullName>Toxin-like structure LSTX-A7</fullName>
    </alternativeName>
</protein>
<accession>B6DCJ6</accession>
<name>TX107_LYCSI</name>
<dbReference type="EMBL" id="EU925930">
    <property type="protein sequence ID" value="ACI41262.1"/>
    <property type="molecule type" value="mRNA"/>
</dbReference>
<dbReference type="EMBL" id="FM863934">
    <property type="protein sequence ID" value="CAS03533.1"/>
    <property type="molecule type" value="mRNA"/>
</dbReference>
<dbReference type="SMR" id="B6DCJ6"/>
<dbReference type="ArachnoServer" id="AS000879">
    <property type="toxin name" value="U1-lycotoxin-Ls1e"/>
</dbReference>
<dbReference type="GO" id="GO:0005576">
    <property type="term" value="C:extracellular region"/>
    <property type="evidence" value="ECO:0007669"/>
    <property type="project" value="UniProtKB-SubCell"/>
</dbReference>
<dbReference type="GO" id="GO:0090729">
    <property type="term" value="F:toxin activity"/>
    <property type="evidence" value="ECO:0007669"/>
    <property type="project" value="UniProtKB-KW"/>
</dbReference>
<dbReference type="InterPro" id="IPR019553">
    <property type="entry name" value="Spider_toxin_CSTX_knottin"/>
</dbReference>
<dbReference type="InterPro" id="IPR011142">
    <property type="entry name" value="Spider_toxin_CSTX_Knottin_CS"/>
</dbReference>
<dbReference type="Pfam" id="PF10530">
    <property type="entry name" value="Toxin_35"/>
    <property type="match status" value="1"/>
</dbReference>
<dbReference type="PROSITE" id="PS60029">
    <property type="entry name" value="SPIDER_CSTX"/>
    <property type="match status" value="1"/>
</dbReference>
<proteinExistence type="evidence at transcript level"/>
<keyword id="KW-1015">Disulfide bond</keyword>
<keyword id="KW-0960">Knottin</keyword>
<keyword id="KW-0964">Secreted</keyword>
<keyword id="KW-0732">Signal</keyword>
<keyword id="KW-0800">Toxin</keyword>